<keyword id="KW-0547">Nucleotide-binding</keyword>
<keyword id="KW-1185">Reference proteome</keyword>
<comment type="function">
    <text evidence="1">Nucleotide-binding protein.</text>
</comment>
<comment type="similarity">
    <text evidence="1">Belongs to the YajQ family.</text>
</comment>
<dbReference type="EMBL" id="AE008922">
    <property type="protein sequence ID" value="AAM42902.1"/>
    <property type="molecule type" value="Genomic_DNA"/>
</dbReference>
<dbReference type="RefSeq" id="NP_638978.1">
    <property type="nucleotide sequence ID" value="NC_003902.1"/>
</dbReference>
<dbReference type="RefSeq" id="WP_011038715.1">
    <property type="nucleotide sequence ID" value="NC_003902.1"/>
</dbReference>
<dbReference type="SMR" id="Q8P4S5"/>
<dbReference type="STRING" id="190485.XCC3632"/>
<dbReference type="EnsemblBacteria" id="AAM42902">
    <property type="protein sequence ID" value="AAM42902"/>
    <property type="gene ID" value="XCC3632"/>
</dbReference>
<dbReference type="KEGG" id="xcc:XCC3632"/>
<dbReference type="PATRIC" id="fig|190485.4.peg.3891"/>
<dbReference type="eggNOG" id="COG1666">
    <property type="taxonomic scope" value="Bacteria"/>
</dbReference>
<dbReference type="HOGENOM" id="CLU_099839_1_0_6"/>
<dbReference type="OrthoDB" id="9801447at2"/>
<dbReference type="Proteomes" id="UP000001010">
    <property type="component" value="Chromosome"/>
</dbReference>
<dbReference type="GO" id="GO:0005829">
    <property type="term" value="C:cytosol"/>
    <property type="evidence" value="ECO:0000318"/>
    <property type="project" value="GO_Central"/>
</dbReference>
<dbReference type="GO" id="GO:0000166">
    <property type="term" value="F:nucleotide binding"/>
    <property type="evidence" value="ECO:0000318"/>
    <property type="project" value="GO_Central"/>
</dbReference>
<dbReference type="CDD" id="cd11740">
    <property type="entry name" value="YajQ_like"/>
    <property type="match status" value="1"/>
</dbReference>
<dbReference type="FunFam" id="3.30.70.990:FF:000001">
    <property type="entry name" value="UPF0234 protein YajQ"/>
    <property type="match status" value="1"/>
</dbReference>
<dbReference type="Gene3D" id="3.30.70.860">
    <property type="match status" value="1"/>
</dbReference>
<dbReference type="Gene3D" id="3.30.70.990">
    <property type="entry name" value="YajQ-like, domain 2"/>
    <property type="match status" value="1"/>
</dbReference>
<dbReference type="HAMAP" id="MF_00632">
    <property type="entry name" value="YajQ"/>
    <property type="match status" value="1"/>
</dbReference>
<dbReference type="InterPro" id="IPR007551">
    <property type="entry name" value="DUF520"/>
</dbReference>
<dbReference type="InterPro" id="IPR035571">
    <property type="entry name" value="UPF0234-like_C"/>
</dbReference>
<dbReference type="InterPro" id="IPR035570">
    <property type="entry name" value="UPF0234_N"/>
</dbReference>
<dbReference type="InterPro" id="IPR036183">
    <property type="entry name" value="YajQ-like_sf"/>
</dbReference>
<dbReference type="NCBIfam" id="NF003819">
    <property type="entry name" value="PRK05412.1"/>
    <property type="match status" value="1"/>
</dbReference>
<dbReference type="PANTHER" id="PTHR30476">
    <property type="entry name" value="UPF0234 PROTEIN YAJQ"/>
    <property type="match status" value="1"/>
</dbReference>
<dbReference type="PANTHER" id="PTHR30476:SF0">
    <property type="entry name" value="UPF0234 PROTEIN YAJQ"/>
    <property type="match status" value="1"/>
</dbReference>
<dbReference type="Pfam" id="PF04461">
    <property type="entry name" value="DUF520"/>
    <property type="match status" value="1"/>
</dbReference>
<dbReference type="SUPFAM" id="SSF89963">
    <property type="entry name" value="YajQ-like"/>
    <property type="match status" value="2"/>
</dbReference>
<organism>
    <name type="scientific">Xanthomonas campestris pv. campestris (strain ATCC 33913 / DSM 3586 / NCPPB 528 / LMG 568 / P 25)</name>
    <dbReference type="NCBI Taxonomy" id="190485"/>
    <lineage>
        <taxon>Bacteria</taxon>
        <taxon>Pseudomonadati</taxon>
        <taxon>Pseudomonadota</taxon>
        <taxon>Gammaproteobacteria</taxon>
        <taxon>Lysobacterales</taxon>
        <taxon>Lysobacteraceae</taxon>
        <taxon>Xanthomonas</taxon>
    </lineage>
</organism>
<reference key="1">
    <citation type="journal article" date="2002" name="Nature">
        <title>Comparison of the genomes of two Xanthomonas pathogens with differing host specificities.</title>
        <authorList>
            <person name="da Silva A.C.R."/>
            <person name="Ferro J.A."/>
            <person name="Reinach F.C."/>
            <person name="Farah C.S."/>
            <person name="Furlan L.R."/>
            <person name="Quaggio R.B."/>
            <person name="Monteiro-Vitorello C.B."/>
            <person name="Van Sluys M.A."/>
            <person name="Almeida N.F. Jr."/>
            <person name="Alves L.M.C."/>
            <person name="do Amaral A.M."/>
            <person name="Bertolini M.C."/>
            <person name="Camargo L.E.A."/>
            <person name="Camarotte G."/>
            <person name="Cannavan F."/>
            <person name="Cardozo J."/>
            <person name="Chambergo F."/>
            <person name="Ciapina L.P."/>
            <person name="Cicarelli R.M.B."/>
            <person name="Coutinho L.L."/>
            <person name="Cursino-Santos J.R."/>
            <person name="El-Dorry H."/>
            <person name="Faria J.B."/>
            <person name="Ferreira A.J.S."/>
            <person name="Ferreira R.C.C."/>
            <person name="Ferro M.I.T."/>
            <person name="Formighieri E.F."/>
            <person name="Franco M.C."/>
            <person name="Greggio C.C."/>
            <person name="Gruber A."/>
            <person name="Katsuyama A.M."/>
            <person name="Kishi L.T."/>
            <person name="Leite R.P."/>
            <person name="Lemos E.G.M."/>
            <person name="Lemos M.V.F."/>
            <person name="Locali E.C."/>
            <person name="Machado M.A."/>
            <person name="Madeira A.M.B.N."/>
            <person name="Martinez-Rossi N.M."/>
            <person name="Martins E.C."/>
            <person name="Meidanis J."/>
            <person name="Menck C.F.M."/>
            <person name="Miyaki C.Y."/>
            <person name="Moon D.H."/>
            <person name="Moreira L.M."/>
            <person name="Novo M.T.M."/>
            <person name="Okura V.K."/>
            <person name="Oliveira M.C."/>
            <person name="Oliveira V.R."/>
            <person name="Pereira H.A."/>
            <person name="Rossi A."/>
            <person name="Sena J.A.D."/>
            <person name="Silva C."/>
            <person name="de Souza R.F."/>
            <person name="Spinola L.A.F."/>
            <person name="Takita M.A."/>
            <person name="Tamura R.E."/>
            <person name="Teixeira E.C."/>
            <person name="Tezza R.I.D."/>
            <person name="Trindade dos Santos M."/>
            <person name="Truffi D."/>
            <person name="Tsai S.M."/>
            <person name="White F.F."/>
            <person name="Setubal J.C."/>
            <person name="Kitajima J.P."/>
        </authorList>
    </citation>
    <scope>NUCLEOTIDE SEQUENCE [LARGE SCALE GENOMIC DNA]</scope>
    <source>
        <strain>ATCC 33913 / DSM 3586 / NCPPB 528 / LMG 568 / P 25</strain>
    </source>
</reference>
<feature type="chain" id="PRO_0000106209" description="Nucleotide-binding protein XCC3632">
    <location>
        <begin position="1"/>
        <end position="161"/>
    </location>
</feature>
<protein>
    <recommendedName>
        <fullName evidence="1">Nucleotide-binding protein XCC3632</fullName>
    </recommendedName>
</protein>
<sequence>MPSFDVISEVDKHELTNAVDQANRELDTRFDFKGVEAKFELEDGKVINQSAPSDFQVKQMTDILRARLLARGIDVRCLEFGDVETNLAGARQKVTVKQGIEQKQAKQLVAKLKEAKLKVEAQINGDKLRVTGKKRDDLQDAIAVLKKADFELPLQFDNFRD</sequence>
<gene>
    <name type="ordered locus">XCC3632</name>
</gene>
<evidence type="ECO:0000255" key="1">
    <source>
        <dbReference type="HAMAP-Rule" id="MF_00632"/>
    </source>
</evidence>
<proteinExistence type="inferred from homology"/>
<accession>Q8P4S5</accession>
<name>Y3632_XANCP</name>